<reference key="1">
    <citation type="journal article" date="1995" name="Yeast">
        <title>Sequence analysis of a 44 kb DNA fragment of yeast chromosome XV including the Ty1-H3 retrotransposon, the suf1(+) frameshift suppressor gene for tRNA-Gly, the yeast transfer RNA-Thr-1a and a delta element.</title>
        <authorList>
            <person name="Vandenbol M."/>
            <person name="Durand P."/>
            <person name="Portetelle D."/>
            <person name="Hilger F."/>
        </authorList>
    </citation>
    <scope>NUCLEOTIDE SEQUENCE [GENOMIC DNA]</scope>
</reference>
<reference key="2">
    <citation type="journal article" date="1997" name="Nature">
        <title>The nucleotide sequence of Saccharomyces cerevisiae chromosome XV.</title>
        <authorList>
            <person name="Dujon B."/>
            <person name="Albermann K."/>
            <person name="Aldea M."/>
            <person name="Alexandraki D."/>
            <person name="Ansorge W."/>
            <person name="Arino J."/>
            <person name="Benes V."/>
            <person name="Bohn C."/>
            <person name="Bolotin-Fukuhara M."/>
            <person name="Bordonne R."/>
            <person name="Boyer J."/>
            <person name="Camasses A."/>
            <person name="Casamayor A."/>
            <person name="Casas C."/>
            <person name="Cheret G."/>
            <person name="Cziepluch C."/>
            <person name="Daignan-Fornier B."/>
            <person name="Dang V.-D."/>
            <person name="de Haan M."/>
            <person name="Delius H."/>
            <person name="Durand P."/>
            <person name="Fairhead C."/>
            <person name="Feldmann H."/>
            <person name="Gaillon L."/>
            <person name="Galisson F."/>
            <person name="Gamo F.-J."/>
            <person name="Gancedo C."/>
            <person name="Goffeau A."/>
            <person name="Goulding S.E."/>
            <person name="Grivell L.A."/>
            <person name="Habbig B."/>
            <person name="Hand N.J."/>
            <person name="Hani J."/>
            <person name="Hattenhorst U."/>
            <person name="Hebling U."/>
            <person name="Hernando Y."/>
            <person name="Herrero E."/>
            <person name="Heumann K."/>
            <person name="Hiesel R."/>
            <person name="Hilger F."/>
            <person name="Hofmann B."/>
            <person name="Hollenberg C.P."/>
            <person name="Hughes B."/>
            <person name="Jauniaux J.-C."/>
            <person name="Kalogeropoulos A."/>
            <person name="Katsoulou C."/>
            <person name="Kordes E."/>
            <person name="Lafuente M.J."/>
            <person name="Landt O."/>
            <person name="Louis E.J."/>
            <person name="Maarse A.C."/>
            <person name="Madania A."/>
            <person name="Mannhaupt G."/>
            <person name="Marck C."/>
            <person name="Martin R.P."/>
            <person name="Mewes H.-W."/>
            <person name="Michaux G."/>
            <person name="Paces V."/>
            <person name="Parle-McDermott A.G."/>
            <person name="Pearson B.M."/>
            <person name="Perrin A."/>
            <person name="Pettersson B."/>
            <person name="Poch O."/>
            <person name="Pohl T.M."/>
            <person name="Poirey R."/>
            <person name="Portetelle D."/>
            <person name="Pujol A."/>
            <person name="Purnelle B."/>
            <person name="Ramezani Rad M."/>
            <person name="Rechmann S."/>
            <person name="Schwager C."/>
            <person name="Schweizer M."/>
            <person name="Sor F."/>
            <person name="Sterky F."/>
            <person name="Tarassov I.A."/>
            <person name="Teodoru C."/>
            <person name="Tettelin H."/>
            <person name="Thierry A."/>
            <person name="Tobiasch E."/>
            <person name="Tzermia M."/>
            <person name="Uhlen M."/>
            <person name="Unseld M."/>
            <person name="Valens M."/>
            <person name="Vandenbol M."/>
            <person name="Vetter I."/>
            <person name="Vlcek C."/>
            <person name="Voet M."/>
            <person name="Volckaert G."/>
            <person name="Voss H."/>
            <person name="Wambutt R."/>
            <person name="Wedler H."/>
            <person name="Wiemann S."/>
            <person name="Winsor B."/>
            <person name="Wolfe K.H."/>
            <person name="Zollner A."/>
            <person name="Zumstein E."/>
            <person name="Kleine K."/>
        </authorList>
    </citation>
    <scope>NUCLEOTIDE SEQUENCE [LARGE SCALE GENOMIC DNA]</scope>
    <source>
        <strain>ATCC 204508 / S288c</strain>
    </source>
</reference>
<reference key="3">
    <citation type="journal article" date="2014" name="G3 (Bethesda)">
        <title>The reference genome sequence of Saccharomyces cerevisiae: Then and now.</title>
        <authorList>
            <person name="Engel S.R."/>
            <person name="Dietrich F.S."/>
            <person name="Fisk D.G."/>
            <person name="Binkley G."/>
            <person name="Balakrishnan R."/>
            <person name="Costanzo M.C."/>
            <person name="Dwight S.S."/>
            <person name="Hitz B.C."/>
            <person name="Karra K."/>
            <person name="Nash R.S."/>
            <person name="Weng S."/>
            <person name="Wong E.D."/>
            <person name="Lloyd P."/>
            <person name="Skrzypek M.S."/>
            <person name="Miyasato S.R."/>
            <person name="Simison M."/>
            <person name="Cherry J.M."/>
        </authorList>
    </citation>
    <scope>GENOME REANNOTATION</scope>
    <source>
        <strain>ATCC 204508 / S288c</strain>
    </source>
</reference>
<reference key="4">
    <citation type="journal article" date="2007" name="Genome Res.">
        <title>Approaching a complete repository of sequence-verified protein-encoding clones for Saccharomyces cerevisiae.</title>
        <authorList>
            <person name="Hu Y."/>
            <person name="Rolfs A."/>
            <person name="Bhullar B."/>
            <person name="Murthy T.V.S."/>
            <person name="Zhu C."/>
            <person name="Berger M.F."/>
            <person name="Camargo A.A."/>
            <person name="Kelley F."/>
            <person name="McCarron S."/>
            <person name="Jepson D."/>
            <person name="Richardson A."/>
            <person name="Raphael J."/>
            <person name="Moreira D."/>
            <person name="Taycher E."/>
            <person name="Zuo D."/>
            <person name="Mohr S."/>
            <person name="Kane M.F."/>
            <person name="Williamson J."/>
            <person name="Simpson A.J.G."/>
            <person name="Bulyk M.L."/>
            <person name="Harlow E."/>
            <person name="Marsischky G."/>
            <person name="Kolodner R.D."/>
            <person name="LaBaer J."/>
        </authorList>
    </citation>
    <scope>NUCLEOTIDE SEQUENCE [GENOMIC DNA]</scope>
    <source>
        <strain>ATCC 204508 / S288c</strain>
    </source>
</reference>
<reference key="5">
    <citation type="journal article" date="2003" name="J. Biol. Chem.">
        <title>Topology models for 37 Saccharomyces cerevisiae membrane proteins based on C-terminal reporter fusions and predictions.</title>
        <authorList>
            <person name="Kim H."/>
            <person name="Melen K."/>
            <person name="von Heijne G."/>
        </authorList>
    </citation>
    <scope>TOPOLOGY</scope>
    <scope>GLYCOSYLATION</scope>
</reference>
<reference key="6">
    <citation type="journal article" date="2003" name="Nature">
        <title>Global analysis of protein localization in budding yeast.</title>
        <authorList>
            <person name="Huh W.-K."/>
            <person name="Falvo J.V."/>
            <person name="Gerke L.C."/>
            <person name="Carroll A.S."/>
            <person name="Howson R.W."/>
            <person name="Weissman J.S."/>
            <person name="O'Shea E.K."/>
        </authorList>
    </citation>
    <scope>SUBCELLULAR LOCATION [LARGE SCALE ANALYSIS]</scope>
</reference>
<reference key="7">
    <citation type="journal article" date="2004" name="Proc. Natl. Acad. Sci. U.S.A.">
        <title>Metalloregulation of yeast membrane steroid receptor homologs.</title>
        <authorList>
            <person name="Lyons T.J."/>
            <person name="Villa N.Y."/>
            <person name="Regalla L.M."/>
            <person name="Kupchak B.R."/>
            <person name="Vagstad A."/>
            <person name="Eide D.J."/>
        </authorList>
    </citation>
    <scope>FUNCTION</scope>
    <scope>INDUCTION</scope>
</reference>
<reference key="8">
    <citation type="journal article" date="2006" name="Proc. Natl. Acad. Sci. U.S.A.">
        <title>A global topology map of the Saccharomyces cerevisiae membrane proteome.</title>
        <authorList>
            <person name="Kim H."/>
            <person name="Melen K."/>
            <person name="Oesterberg M."/>
            <person name="von Heijne G."/>
        </authorList>
    </citation>
    <scope>TOPOLOGY [LARGE SCALE ANALYSIS]</scope>
    <source>
        <strain>ATCC 208353 / W303-1A</strain>
    </source>
</reference>
<sequence length="312" mass="36608">MVSLTTIEQSPVKCETTTEKESNDTRGTDSNENAETKETKKGFPFHDLAKLQKQYKNKSSRNESLVALIYLLGSMLSFCLLIFFTDFYLIPLFPTTTTMTDYIVFNFYLLNVFVFCMVHFIYHFVKNISLQQHLEHWQKFSYLSNINLLISSQITILYYLFYDYVFFFKIFTLLMNFIGLVAYFFILTDKLISSKRFNKTVFFISVSVVCCSLPLLTAIITFDGLENLKERIKVNAITWELVALVAASIIYVTRFPESLFRRNKKEEGWNHSEYLFHLLISGTAFYHFFILIQSYILMHSSLNQPELINFKS</sequence>
<keyword id="KW-0256">Endoplasmic reticulum</keyword>
<keyword id="KW-0472">Membrane</keyword>
<keyword id="KW-1185">Reference proteome</keyword>
<keyword id="KW-0812">Transmembrane</keyword>
<keyword id="KW-1133">Transmembrane helix</keyword>
<evidence type="ECO:0000255" key="1"/>
<evidence type="ECO:0000256" key="2">
    <source>
        <dbReference type="SAM" id="MobiDB-lite"/>
    </source>
</evidence>
<evidence type="ECO:0000269" key="3">
    <source>
    </source>
</evidence>
<evidence type="ECO:0000269" key="4">
    <source>
    </source>
</evidence>
<evidence type="ECO:0000305" key="5"/>
<proteinExistence type="evidence at protein level"/>
<gene>
    <name type="primary">IZH4</name>
    <name type="ordered locus">YOL101C</name>
</gene>
<comment type="function">
    <text evidence="4">ADIPOR-like receptor involved in zinc metabolism either by altering membrane sterol content or by directly altering cellular zinc levels.</text>
</comment>
<comment type="subcellular location">
    <subcellularLocation>
        <location evidence="3">Endoplasmic reticulum membrane</location>
        <topology evidence="3">Multi-pass membrane protein</topology>
    </subcellularLocation>
</comment>
<comment type="induction">
    <text evidence="4">By excess zinc.</text>
</comment>
<comment type="similarity">
    <text evidence="5">Belongs to the ADIPOR family.</text>
</comment>
<dbReference type="EMBL" id="Z48149">
    <property type="protein sequence ID" value="CAA88161.1"/>
    <property type="molecule type" value="Genomic_DNA"/>
</dbReference>
<dbReference type="EMBL" id="Z74843">
    <property type="protein sequence ID" value="CAA99115.1"/>
    <property type="molecule type" value="Genomic_DNA"/>
</dbReference>
<dbReference type="EMBL" id="AY692588">
    <property type="protein sequence ID" value="AAT92607.1"/>
    <property type="molecule type" value="Genomic_DNA"/>
</dbReference>
<dbReference type="EMBL" id="BK006948">
    <property type="protein sequence ID" value="DAA10683.1"/>
    <property type="molecule type" value="Genomic_DNA"/>
</dbReference>
<dbReference type="PIR" id="S51898">
    <property type="entry name" value="S51898"/>
</dbReference>
<dbReference type="RefSeq" id="NP_014540.1">
    <property type="nucleotide sequence ID" value="NM_001183355.1"/>
</dbReference>
<dbReference type="SMR" id="Q99393"/>
<dbReference type="BioGRID" id="34302">
    <property type="interactions" value="53"/>
</dbReference>
<dbReference type="DIP" id="DIP-5059N"/>
<dbReference type="FunCoup" id="Q99393">
    <property type="interactions" value="106"/>
</dbReference>
<dbReference type="IntAct" id="Q99393">
    <property type="interactions" value="3"/>
</dbReference>
<dbReference type="STRING" id="4932.YOL101C"/>
<dbReference type="iPTMnet" id="Q99393"/>
<dbReference type="PaxDb" id="4932-YOL101C"/>
<dbReference type="PeptideAtlas" id="Q99393"/>
<dbReference type="EnsemblFungi" id="YOL101C_mRNA">
    <property type="protein sequence ID" value="YOL101C"/>
    <property type="gene ID" value="YOL101C"/>
</dbReference>
<dbReference type="GeneID" id="854052"/>
<dbReference type="KEGG" id="sce:YOL101C"/>
<dbReference type="AGR" id="SGD:S000005461"/>
<dbReference type="SGD" id="S000005461">
    <property type="gene designation" value="IZH4"/>
</dbReference>
<dbReference type="VEuPathDB" id="FungiDB:YOL101C"/>
<dbReference type="eggNOG" id="KOG0748">
    <property type="taxonomic scope" value="Eukaryota"/>
</dbReference>
<dbReference type="HOGENOM" id="CLU_077476_0_0_1"/>
<dbReference type="InParanoid" id="Q99393"/>
<dbReference type="OMA" id="SPVKCET"/>
<dbReference type="OrthoDB" id="4057435at2759"/>
<dbReference type="BioCyc" id="YEAST:G3O-33499-MONOMER"/>
<dbReference type="BioGRID-ORCS" id="854052">
    <property type="hits" value="0 hits in 10 CRISPR screens"/>
</dbReference>
<dbReference type="PRO" id="PR:Q99393"/>
<dbReference type="Proteomes" id="UP000002311">
    <property type="component" value="Chromosome XV"/>
</dbReference>
<dbReference type="RNAct" id="Q99393">
    <property type="molecule type" value="protein"/>
</dbReference>
<dbReference type="GO" id="GO:0005737">
    <property type="term" value="C:cytoplasm"/>
    <property type="evidence" value="ECO:0007005"/>
    <property type="project" value="SGD"/>
</dbReference>
<dbReference type="GO" id="GO:0005789">
    <property type="term" value="C:endoplasmic reticulum membrane"/>
    <property type="evidence" value="ECO:0007669"/>
    <property type="project" value="UniProtKB-SubCell"/>
</dbReference>
<dbReference type="GO" id="GO:0000324">
    <property type="term" value="C:fungal-type vacuole"/>
    <property type="evidence" value="ECO:0007005"/>
    <property type="project" value="SGD"/>
</dbReference>
<dbReference type="GO" id="GO:0005634">
    <property type="term" value="C:nucleus"/>
    <property type="evidence" value="ECO:0007005"/>
    <property type="project" value="SGD"/>
</dbReference>
<dbReference type="GO" id="GO:0038023">
    <property type="term" value="F:signaling receptor activity"/>
    <property type="evidence" value="ECO:0000318"/>
    <property type="project" value="GO_Central"/>
</dbReference>
<dbReference type="GO" id="GO:0006882">
    <property type="term" value="P:intracellular zinc ion homeostasis"/>
    <property type="evidence" value="ECO:0000315"/>
    <property type="project" value="SGD"/>
</dbReference>
<dbReference type="InterPro" id="IPR004254">
    <property type="entry name" value="AdipoR/HlyIII-related"/>
</dbReference>
<dbReference type="PANTHER" id="PTHR20855:SF97">
    <property type="entry name" value="ADIPOR-LIKE RECEPTOR IZH3-RELATED"/>
    <property type="match status" value="1"/>
</dbReference>
<dbReference type="PANTHER" id="PTHR20855">
    <property type="entry name" value="ADIPOR/PROGESTIN RECEPTOR-RELATED"/>
    <property type="match status" value="1"/>
</dbReference>
<dbReference type="Pfam" id="PF03006">
    <property type="entry name" value="HlyIII"/>
    <property type="match status" value="1"/>
</dbReference>
<feature type="chain" id="PRO_0000240376" description="ADIPOR-like receptor IZH4">
    <location>
        <begin position="1"/>
        <end position="312"/>
    </location>
</feature>
<feature type="topological domain" description="Cytoplasmic" evidence="1">
    <location>
        <begin position="1"/>
        <end position="64"/>
    </location>
</feature>
<feature type="transmembrane region" description="Helical" evidence="1">
    <location>
        <begin position="65"/>
        <end position="85"/>
    </location>
</feature>
<feature type="topological domain" description="Lumenal" evidence="1">
    <location>
        <begin position="86"/>
        <end position="101"/>
    </location>
</feature>
<feature type="transmembrane region" description="Helical" evidence="1">
    <location>
        <begin position="102"/>
        <end position="122"/>
    </location>
</feature>
<feature type="topological domain" description="Cytoplasmic" evidence="1">
    <location>
        <begin position="123"/>
        <end position="141"/>
    </location>
</feature>
<feature type="transmembrane region" description="Helical" evidence="1">
    <location>
        <begin position="142"/>
        <end position="162"/>
    </location>
</feature>
<feature type="topological domain" description="Lumenal" evidence="1">
    <location>
        <begin position="163"/>
        <end position="165"/>
    </location>
</feature>
<feature type="transmembrane region" description="Helical" evidence="1">
    <location>
        <begin position="166"/>
        <end position="186"/>
    </location>
</feature>
<feature type="topological domain" description="Cytoplasmic" evidence="1">
    <location>
        <begin position="187"/>
        <end position="201"/>
    </location>
</feature>
<feature type="transmembrane region" description="Helical" evidence="1">
    <location>
        <begin position="202"/>
        <end position="222"/>
    </location>
</feature>
<feature type="topological domain" description="Lumenal" evidence="1">
    <location>
        <begin position="223"/>
        <end position="231"/>
    </location>
</feature>
<feature type="transmembrane region" description="Helical" evidence="1">
    <location>
        <begin position="232"/>
        <end position="252"/>
    </location>
</feature>
<feature type="topological domain" description="Cytoplasmic" evidence="1">
    <location>
        <begin position="253"/>
        <end position="277"/>
    </location>
</feature>
<feature type="transmembrane region" description="Helical" evidence="1">
    <location>
        <begin position="278"/>
        <end position="298"/>
    </location>
</feature>
<feature type="topological domain" description="Lumenal" evidence="1">
    <location>
        <begin position="299"/>
        <end position="312"/>
    </location>
</feature>
<feature type="region of interest" description="Disordered" evidence="2">
    <location>
        <begin position="1"/>
        <end position="38"/>
    </location>
</feature>
<feature type="compositionally biased region" description="Basic and acidic residues" evidence="2">
    <location>
        <begin position="16"/>
        <end position="38"/>
    </location>
</feature>
<feature type="sequence conflict" description="In Ref. 4; AAT92607." evidence="5" ref="4">
    <original>C</original>
    <variation>R</variation>
    <location>
        <position position="211"/>
    </location>
</feature>
<name>IZH4_YEAST</name>
<organism>
    <name type="scientific">Saccharomyces cerevisiae (strain ATCC 204508 / S288c)</name>
    <name type="common">Baker's yeast</name>
    <dbReference type="NCBI Taxonomy" id="559292"/>
    <lineage>
        <taxon>Eukaryota</taxon>
        <taxon>Fungi</taxon>
        <taxon>Dikarya</taxon>
        <taxon>Ascomycota</taxon>
        <taxon>Saccharomycotina</taxon>
        <taxon>Saccharomycetes</taxon>
        <taxon>Saccharomycetales</taxon>
        <taxon>Saccharomycetaceae</taxon>
        <taxon>Saccharomyces</taxon>
    </lineage>
</organism>
<accession>Q99393</accession>
<accession>D6W1W7</accession>
<accession>Q6B2Z2</accession>
<protein>
    <recommendedName>
        <fullName>ADIPOR-like receptor IZH4</fullName>
    </recommendedName>
    <alternativeName>
        <fullName>Implicated in zinc homeostasis protein 4</fullName>
    </alternativeName>
</protein>